<dbReference type="EC" id="1.13.11.-" evidence="2"/>
<dbReference type="EMBL" id="EF052681">
    <property type="protein sequence ID" value="ABM69260.1"/>
    <property type="molecule type" value="mRNA"/>
</dbReference>
<dbReference type="EMBL" id="AK128691">
    <property type="protein sequence ID" value="BAC87573.1"/>
    <property type="status" value="ALT_INIT"/>
    <property type="molecule type" value="mRNA"/>
</dbReference>
<dbReference type="EMBL" id="AC007991">
    <property type="status" value="NOT_ANNOTATED_CDS"/>
    <property type="molecule type" value="Genomic_DNA"/>
</dbReference>
<dbReference type="EMBL" id="AC087518">
    <property type="status" value="NOT_ANNOTATED_CDS"/>
    <property type="molecule type" value="Genomic_DNA"/>
</dbReference>
<dbReference type="EMBL" id="BC113496">
    <property type="protein sequence ID" value="AAI13497.1"/>
    <property type="status" value="ALT_INIT"/>
    <property type="molecule type" value="mRNA"/>
</dbReference>
<dbReference type="EMBL" id="BC113498">
    <property type="protein sequence ID" value="AAI13499.1"/>
    <property type="status" value="ALT_INIT"/>
    <property type="molecule type" value="mRNA"/>
</dbReference>
<dbReference type="CCDS" id="CCDS6114.3">
    <molecule id="Q6ZQW0-1"/>
</dbReference>
<dbReference type="RefSeq" id="NP_001382135.1">
    <molecule id="Q6ZQW0-1"/>
    <property type="nucleotide sequence ID" value="NM_001395206.1"/>
</dbReference>
<dbReference type="RefSeq" id="NP_919270.3">
    <molecule id="Q6ZQW0-1"/>
    <property type="nucleotide sequence ID" value="NM_194294.5"/>
</dbReference>
<dbReference type="SMR" id="Q6ZQW0"/>
<dbReference type="BioGRID" id="127980">
    <property type="interactions" value="124"/>
</dbReference>
<dbReference type="FunCoup" id="Q6ZQW0">
    <property type="interactions" value="244"/>
</dbReference>
<dbReference type="IntAct" id="Q6ZQW0">
    <property type="interactions" value="11"/>
</dbReference>
<dbReference type="STRING" id="9606.ENSP00000443432"/>
<dbReference type="BindingDB" id="Q6ZQW0"/>
<dbReference type="ChEMBL" id="CHEMBL3627587"/>
<dbReference type="GuidetoPHARMACOLOGY" id="3019"/>
<dbReference type="iPTMnet" id="Q6ZQW0"/>
<dbReference type="PhosphoSitePlus" id="Q6ZQW0"/>
<dbReference type="BioMuta" id="IDO2"/>
<dbReference type="DMDM" id="215274147"/>
<dbReference type="PaxDb" id="9606-ENSP00000443432"/>
<dbReference type="Antibodypedia" id="42276">
    <property type="antibodies" value="497 antibodies from 34 providers"/>
</dbReference>
<dbReference type="DNASU" id="169355"/>
<dbReference type="Ensembl" id="ENST00000502986.4">
    <molecule id="Q6ZQW0-1"/>
    <property type="protein sequence ID" value="ENSP00000443432.2"/>
    <property type="gene ID" value="ENSG00000188676.15"/>
</dbReference>
<dbReference type="GeneID" id="169355"/>
<dbReference type="KEGG" id="hsa:169355"/>
<dbReference type="MANE-Select" id="ENST00000502986.4">
    <property type="protein sequence ID" value="ENSP00000443432.2"/>
    <property type="RefSeq nucleotide sequence ID" value="NM_194294.5"/>
    <property type="RefSeq protein sequence ID" value="NP_919270.3"/>
</dbReference>
<dbReference type="UCSC" id="uc010lwy.1">
    <property type="organism name" value="human"/>
</dbReference>
<dbReference type="UCSC" id="uc064mgi.1">
    <molecule id="Q6ZQW0-1"/>
    <property type="organism name" value="human"/>
</dbReference>
<dbReference type="AGR" id="HGNC:27269"/>
<dbReference type="CTD" id="169355"/>
<dbReference type="DisGeNET" id="169355"/>
<dbReference type="GeneCards" id="IDO2"/>
<dbReference type="HGNC" id="HGNC:27269">
    <property type="gene designation" value="IDO2"/>
</dbReference>
<dbReference type="HPA" id="ENSG00000188676">
    <property type="expression patterns" value="Group enriched (liver, placenta)"/>
</dbReference>
<dbReference type="MIM" id="612129">
    <property type="type" value="gene"/>
</dbReference>
<dbReference type="neXtProt" id="NX_Q6ZQW0"/>
<dbReference type="OpenTargets" id="ENSG00000188676"/>
<dbReference type="PharmGKB" id="PA164720782"/>
<dbReference type="VEuPathDB" id="HostDB:ENSG00000188676"/>
<dbReference type="eggNOG" id="ENOG502QT99">
    <property type="taxonomic scope" value="Eukaryota"/>
</dbReference>
<dbReference type="GeneTree" id="ENSGT00940000161813"/>
<dbReference type="HOGENOM" id="CLU_010089_1_0_1"/>
<dbReference type="InParanoid" id="Q6ZQW0"/>
<dbReference type="OrthoDB" id="10262710at2759"/>
<dbReference type="PAN-GO" id="Q6ZQW0">
    <property type="GO annotations" value="5 GO annotations based on evolutionary models"/>
</dbReference>
<dbReference type="PhylomeDB" id="Q6ZQW0"/>
<dbReference type="TreeFam" id="TF330978"/>
<dbReference type="BRENDA" id="1.13.11.11">
    <property type="organism ID" value="2681"/>
</dbReference>
<dbReference type="BRENDA" id="1.13.11.52">
    <property type="organism ID" value="2681"/>
</dbReference>
<dbReference type="PathwayCommons" id="Q6ZQW0"/>
<dbReference type="Reactome" id="R-HSA-71240">
    <property type="pathway name" value="Tryptophan catabolism"/>
</dbReference>
<dbReference type="SABIO-RK" id="Q6ZQW0"/>
<dbReference type="SignaLink" id="Q6ZQW0"/>
<dbReference type="UniPathway" id="UPA00333">
    <property type="reaction ID" value="UER00453"/>
</dbReference>
<dbReference type="BioGRID-ORCS" id="169355">
    <property type="hits" value="2 hits in 315 CRISPR screens"/>
</dbReference>
<dbReference type="ChiTaRS" id="IDO2">
    <property type="organism name" value="human"/>
</dbReference>
<dbReference type="GenomeRNAi" id="169355"/>
<dbReference type="Pharos" id="Q6ZQW0">
    <property type="development level" value="Tchem"/>
</dbReference>
<dbReference type="PRO" id="PR:Q6ZQW0"/>
<dbReference type="Proteomes" id="UP000005640">
    <property type="component" value="Chromosome 8"/>
</dbReference>
<dbReference type="RNAct" id="Q6ZQW0">
    <property type="molecule type" value="protein"/>
</dbReference>
<dbReference type="Bgee" id="ENSG00000188676">
    <property type="expression patterns" value="Expressed in right lobe of liver and 57 other cell types or tissues"/>
</dbReference>
<dbReference type="ExpressionAtlas" id="Q6ZQW0">
    <property type="expression patterns" value="baseline and differential"/>
</dbReference>
<dbReference type="GO" id="GO:0005737">
    <property type="term" value="C:cytoplasm"/>
    <property type="evidence" value="ECO:0000250"/>
    <property type="project" value="UniProtKB"/>
</dbReference>
<dbReference type="GO" id="GO:0005829">
    <property type="term" value="C:cytosol"/>
    <property type="evidence" value="ECO:0000304"/>
    <property type="project" value="Reactome"/>
</dbReference>
<dbReference type="GO" id="GO:0020037">
    <property type="term" value="F:heme binding"/>
    <property type="evidence" value="ECO:0007669"/>
    <property type="project" value="InterPro"/>
</dbReference>
<dbReference type="GO" id="GO:0033754">
    <property type="term" value="F:indoleamine 2,3-dioxygenase activity"/>
    <property type="evidence" value="ECO:0000314"/>
    <property type="project" value="UniProtKB"/>
</dbReference>
<dbReference type="GO" id="GO:0046872">
    <property type="term" value="F:metal ion binding"/>
    <property type="evidence" value="ECO:0007669"/>
    <property type="project" value="UniProtKB-KW"/>
</dbReference>
<dbReference type="GO" id="GO:0004833">
    <property type="term" value="F:tryptophan 2,3-dioxygenase activity"/>
    <property type="evidence" value="ECO:0000318"/>
    <property type="project" value="GO_Central"/>
</dbReference>
<dbReference type="GO" id="GO:0034354">
    <property type="term" value="P:'de novo' NAD biosynthetic process from L-tryptophan"/>
    <property type="evidence" value="ECO:0000318"/>
    <property type="project" value="GO_Central"/>
</dbReference>
<dbReference type="GO" id="GO:0002376">
    <property type="term" value="P:immune system process"/>
    <property type="evidence" value="ECO:0007669"/>
    <property type="project" value="UniProtKB-KW"/>
</dbReference>
<dbReference type="GO" id="GO:0019441">
    <property type="term" value="P:L-tryptophan catabolic process to kynurenine"/>
    <property type="evidence" value="ECO:0000314"/>
    <property type="project" value="UniProtKB"/>
</dbReference>
<dbReference type="FunFam" id="1.20.58.480:FF:000003">
    <property type="entry name" value="Indoleamine 2,3-dioxygenase 1"/>
    <property type="match status" value="1"/>
</dbReference>
<dbReference type="Gene3D" id="1.20.58.480">
    <property type="match status" value="1"/>
</dbReference>
<dbReference type="InterPro" id="IPR000898">
    <property type="entry name" value="Indolamine_dOase"/>
</dbReference>
<dbReference type="InterPro" id="IPR037217">
    <property type="entry name" value="Trp/Indoleamine_2_3_dOase-like"/>
</dbReference>
<dbReference type="PANTHER" id="PTHR28657">
    <property type="entry name" value="INDOLEAMINE 2,3-DIOXYGENASE"/>
    <property type="match status" value="1"/>
</dbReference>
<dbReference type="PANTHER" id="PTHR28657:SF4">
    <property type="entry name" value="INDOLEAMINE 2,3-DIOXYGENASE 2"/>
    <property type="match status" value="1"/>
</dbReference>
<dbReference type="Pfam" id="PF01231">
    <property type="entry name" value="IDO"/>
    <property type="match status" value="1"/>
</dbReference>
<dbReference type="SUPFAM" id="SSF140959">
    <property type="entry name" value="Indolic compounds 2,3-dioxygenase-like"/>
    <property type="match status" value="1"/>
</dbReference>
<organism>
    <name type="scientific">Homo sapiens</name>
    <name type="common">Human</name>
    <dbReference type="NCBI Taxonomy" id="9606"/>
    <lineage>
        <taxon>Eukaryota</taxon>
        <taxon>Metazoa</taxon>
        <taxon>Chordata</taxon>
        <taxon>Craniata</taxon>
        <taxon>Vertebrata</taxon>
        <taxon>Euteleostomi</taxon>
        <taxon>Mammalia</taxon>
        <taxon>Eutheria</taxon>
        <taxon>Euarchontoglires</taxon>
        <taxon>Primates</taxon>
        <taxon>Haplorrhini</taxon>
        <taxon>Catarrhini</taxon>
        <taxon>Hominidae</taxon>
        <taxon>Homo</taxon>
    </lineage>
</organism>
<reference key="1">
    <citation type="journal article" date="2007" name="Gene">
        <title>Characterization of an indoleamine 2,3-dioxygenase-like protein found in humans and mice.</title>
        <authorList>
            <person name="Ball H.J."/>
            <person name="Sanchez-Perez A."/>
            <person name="Weiser S."/>
            <person name="Austin C.J.D."/>
            <person name="Astelbauer F."/>
            <person name="Miu J."/>
            <person name="McQuillan J.A."/>
            <person name="Stocker R."/>
            <person name="Jermiin L.S."/>
            <person name="Hunt N.H."/>
        </authorList>
    </citation>
    <scope>NUCLEOTIDE SEQUENCE [MRNA] (ISOFORM 1)</scope>
</reference>
<reference key="2">
    <citation type="journal article" date="2004" name="Nat. Genet.">
        <title>Complete sequencing and characterization of 21,243 full-length human cDNAs.</title>
        <authorList>
            <person name="Ota T."/>
            <person name="Suzuki Y."/>
            <person name="Nishikawa T."/>
            <person name="Otsuki T."/>
            <person name="Sugiyama T."/>
            <person name="Irie R."/>
            <person name="Wakamatsu A."/>
            <person name="Hayashi K."/>
            <person name="Sato H."/>
            <person name="Nagai K."/>
            <person name="Kimura K."/>
            <person name="Makita H."/>
            <person name="Sekine M."/>
            <person name="Obayashi M."/>
            <person name="Nishi T."/>
            <person name="Shibahara T."/>
            <person name="Tanaka T."/>
            <person name="Ishii S."/>
            <person name="Yamamoto J."/>
            <person name="Saito K."/>
            <person name="Kawai Y."/>
            <person name="Isono Y."/>
            <person name="Nakamura Y."/>
            <person name="Nagahari K."/>
            <person name="Murakami K."/>
            <person name="Yasuda T."/>
            <person name="Iwayanagi T."/>
            <person name="Wagatsuma M."/>
            <person name="Shiratori A."/>
            <person name="Sudo H."/>
            <person name="Hosoiri T."/>
            <person name="Kaku Y."/>
            <person name="Kodaira H."/>
            <person name="Kondo H."/>
            <person name="Sugawara M."/>
            <person name="Takahashi M."/>
            <person name="Kanda K."/>
            <person name="Yokoi T."/>
            <person name="Furuya T."/>
            <person name="Kikkawa E."/>
            <person name="Omura Y."/>
            <person name="Abe K."/>
            <person name="Kamihara K."/>
            <person name="Katsuta N."/>
            <person name="Sato K."/>
            <person name="Tanikawa M."/>
            <person name="Yamazaki M."/>
            <person name="Ninomiya K."/>
            <person name="Ishibashi T."/>
            <person name="Yamashita H."/>
            <person name="Murakawa K."/>
            <person name="Fujimori K."/>
            <person name="Tanai H."/>
            <person name="Kimata M."/>
            <person name="Watanabe M."/>
            <person name="Hiraoka S."/>
            <person name="Chiba Y."/>
            <person name="Ishida S."/>
            <person name="Ono Y."/>
            <person name="Takiguchi S."/>
            <person name="Watanabe S."/>
            <person name="Yosida M."/>
            <person name="Hotuta T."/>
            <person name="Kusano J."/>
            <person name="Kanehori K."/>
            <person name="Takahashi-Fujii A."/>
            <person name="Hara H."/>
            <person name="Tanase T.-O."/>
            <person name="Nomura Y."/>
            <person name="Togiya S."/>
            <person name="Komai F."/>
            <person name="Hara R."/>
            <person name="Takeuchi K."/>
            <person name="Arita M."/>
            <person name="Imose N."/>
            <person name="Musashino K."/>
            <person name="Yuuki H."/>
            <person name="Oshima A."/>
            <person name="Sasaki N."/>
            <person name="Aotsuka S."/>
            <person name="Yoshikawa Y."/>
            <person name="Matsunawa H."/>
            <person name="Ichihara T."/>
            <person name="Shiohata N."/>
            <person name="Sano S."/>
            <person name="Moriya S."/>
            <person name="Momiyama H."/>
            <person name="Satoh N."/>
            <person name="Takami S."/>
            <person name="Terashima Y."/>
            <person name="Suzuki O."/>
            <person name="Nakagawa S."/>
            <person name="Senoh A."/>
            <person name="Mizoguchi H."/>
            <person name="Goto Y."/>
            <person name="Shimizu F."/>
            <person name="Wakebe H."/>
            <person name="Hishigaki H."/>
            <person name="Watanabe T."/>
            <person name="Sugiyama A."/>
            <person name="Takemoto M."/>
            <person name="Kawakami B."/>
            <person name="Yamazaki M."/>
            <person name="Watanabe K."/>
            <person name="Kumagai A."/>
            <person name="Itakura S."/>
            <person name="Fukuzumi Y."/>
            <person name="Fujimori Y."/>
            <person name="Komiyama M."/>
            <person name="Tashiro H."/>
            <person name="Tanigami A."/>
            <person name="Fujiwara T."/>
            <person name="Ono T."/>
            <person name="Yamada K."/>
            <person name="Fujii Y."/>
            <person name="Ozaki K."/>
            <person name="Hirao M."/>
            <person name="Ohmori Y."/>
            <person name="Kawabata A."/>
            <person name="Hikiji T."/>
            <person name="Kobatake N."/>
            <person name="Inagaki H."/>
            <person name="Ikema Y."/>
            <person name="Okamoto S."/>
            <person name="Okitani R."/>
            <person name="Kawakami T."/>
            <person name="Noguchi S."/>
            <person name="Itoh T."/>
            <person name="Shigeta K."/>
            <person name="Senba T."/>
            <person name="Matsumura K."/>
            <person name="Nakajima Y."/>
            <person name="Mizuno T."/>
            <person name="Morinaga M."/>
            <person name="Sasaki M."/>
            <person name="Togashi T."/>
            <person name="Oyama M."/>
            <person name="Hata H."/>
            <person name="Watanabe M."/>
            <person name="Komatsu T."/>
            <person name="Mizushima-Sugano J."/>
            <person name="Satoh T."/>
            <person name="Shirai Y."/>
            <person name="Takahashi Y."/>
            <person name="Nakagawa K."/>
            <person name="Okumura K."/>
            <person name="Nagase T."/>
            <person name="Nomura N."/>
            <person name="Kikuchi H."/>
            <person name="Masuho Y."/>
            <person name="Yamashita R."/>
            <person name="Nakai K."/>
            <person name="Yada T."/>
            <person name="Nakamura Y."/>
            <person name="Ohara O."/>
            <person name="Isogai T."/>
            <person name="Sugano S."/>
        </authorList>
    </citation>
    <scope>NUCLEOTIDE SEQUENCE [LARGE SCALE MRNA] (ISOFORM 2)</scope>
    <source>
        <tissue>Uterus</tissue>
    </source>
</reference>
<reference key="3">
    <citation type="journal article" date="2006" name="Nature">
        <title>DNA sequence and analysis of human chromosome 8.</title>
        <authorList>
            <person name="Nusbaum C."/>
            <person name="Mikkelsen T.S."/>
            <person name="Zody M.C."/>
            <person name="Asakawa S."/>
            <person name="Taudien S."/>
            <person name="Garber M."/>
            <person name="Kodira C.D."/>
            <person name="Schueler M.G."/>
            <person name="Shimizu A."/>
            <person name="Whittaker C.A."/>
            <person name="Chang J.L."/>
            <person name="Cuomo C.A."/>
            <person name="Dewar K."/>
            <person name="FitzGerald M.G."/>
            <person name="Yang X."/>
            <person name="Allen N.R."/>
            <person name="Anderson S."/>
            <person name="Asakawa T."/>
            <person name="Blechschmidt K."/>
            <person name="Bloom T."/>
            <person name="Borowsky M.L."/>
            <person name="Butler J."/>
            <person name="Cook A."/>
            <person name="Corum B."/>
            <person name="DeArellano K."/>
            <person name="DeCaprio D."/>
            <person name="Dooley K.T."/>
            <person name="Dorris L. III"/>
            <person name="Engels R."/>
            <person name="Gloeckner G."/>
            <person name="Hafez N."/>
            <person name="Hagopian D.S."/>
            <person name="Hall J.L."/>
            <person name="Ishikawa S.K."/>
            <person name="Jaffe D.B."/>
            <person name="Kamat A."/>
            <person name="Kudoh J."/>
            <person name="Lehmann R."/>
            <person name="Lokitsang T."/>
            <person name="Macdonald P."/>
            <person name="Major J.E."/>
            <person name="Matthews C.D."/>
            <person name="Mauceli E."/>
            <person name="Menzel U."/>
            <person name="Mihalev A.H."/>
            <person name="Minoshima S."/>
            <person name="Murayama Y."/>
            <person name="Naylor J.W."/>
            <person name="Nicol R."/>
            <person name="Nguyen C."/>
            <person name="O'Leary S.B."/>
            <person name="O'Neill K."/>
            <person name="Parker S.C.J."/>
            <person name="Polley A."/>
            <person name="Raymond C.K."/>
            <person name="Reichwald K."/>
            <person name="Rodriguez J."/>
            <person name="Sasaki T."/>
            <person name="Schilhabel M."/>
            <person name="Siddiqui R."/>
            <person name="Smith C.L."/>
            <person name="Sneddon T.P."/>
            <person name="Talamas J.A."/>
            <person name="Tenzin P."/>
            <person name="Topham K."/>
            <person name="Venkataraman V."/>
            <person name="Wen G."/>
            <person name="Yamazaki S."/>
            <person name="Young S.K."/>
            <person name="Zeng Q."/>
            <person name="Zimmer A.R."/>
            <person name="Rosenthal A."/>
            <person name="Birren B.W."/>
            <person name="Platzer M."/>
            <person name="Shimizu N."/>
            <person name="Lander E.S."/>
        </authorList>
    </citation>
    <scope>NUCLEOTIDE SEQUENCE [LARGE SCALE GENOMIC DNA]</scope>
</reference>
<reference key="4">
    <citation type="journal article" date="2004" name="Genome Res.">
        <title>The status, quality, and expansion of the NIH full-length cDNA project: the Mammalian Gene Collection (MGC).</title>
        <authorList>
            <consortium name="The MGC Project Team"/>
        </authorList>
    </citation>
    <scope>NUCLEOTIDE SEQUENCE [LARGE SCALE MRNA] (ISOFORM 2)</scope>
</reference>
<reference key="5">
    <citation type="journal article" date="2007" name="Cancer Res.">
        <title>Novel tryptophan catabolic enzyme IDO2 is the preferred biochemical target of the antitumor indoleamine 2,3-dioxygenase inhibitory compound D-1-methyl-tryptophan.</title>
        <authorList>
            <person name="Metz R."/>
            <person name="Duhadaway J.B."/>
            <person name="Kamasani U."/>
            <person name="Laury-Kleintop L."/>
            <person name="Muller A.J."/>
            <person name="Prendergast G.C."/>
        </authorList>
    </citation>
    <scope>FUNCTION</scope>
    <scope>CATALYTIC ACTIVITY</scope>
    <scope>ALTERNATIVE SPLICING</scope>
    <scope>ACTIVITY REGULATION</scope>
    <scope>TISSUE SPECIFICITY</scope>
    <scope>VARIANTS TRP-235 AND 346-TYR--GLY-407 DEL</scope>
</reference>
<reference key="6">
    <citation type="journal article" date="2009" name="Cancer Immunol. Immunother.">
        <title>IDO1 and IDO2 are expressed in human tumors: levo- but not dextro-1-methyl tryptophan inhibits tryptophan catabolism.</title>
        <authorList>
            <person name="Loeb S."/>
            <person name="Koenigsrainer A."/>
            <person name="Zieker D."/>
            <person name="Bruecher B.L."/>
            <person name="Rammensee H.G."/>
            <person name="Opelz G."/>
            <person name="Terness P."/>
        </authorList>
    </citation>
    <scope>MISCELLANEOUS</scope>
    <scope>DIFFERENCE BETWEEN IDO1 AND IDO2</scope>
</reference>
<reference key="7">
    <citation type="journal article" date="2014" name="Exp. Mol. Med.">
        <title>Heme-binding-mediated negative regulation of the tryptophan metabolic enzyme indoleamine 2,3-dioxygenase 1 (IDO1) by IDO2.</title>
        <authorList>
            <person name="Lee Y.K."/>
            <person name="Lee H.B."/>
            <person name="Shin D.M."/>
            <person name="Kang M.J."/>
            <person name="Yi E.C."/>
            <person name="Noh S."/>
            <person name="Lee J."/>
            <person name="Lee C."/>
            <person name="Min C.K."/>
            <person name="Choi E.Y."/>
        </authorList>
    </citation>
    <scope>POLYMORPHISM</scope>
    <scope>DIFFERENCE BETWEEN IDO1 AND IDO2</scope>
</reference>
<reference key="8">
    <citation type="journal article" date="2015" name="FEBS J.">
        <title>Low efficiency IDO2 enzymes are conserved in lower vertebrates, whereas higher efficiency IDO1 enzymes are dispensable.</title>
        <authorList>
            <person name="Yuasa H.J."/>
            <person name="Mizuno K."/>
            <person name="Ball H.J."/>
        </authorList>
    </citation>
    <scope>DIFFERENCE BETWEEN IDO1 AND IDO2</scope>
</reference>
<reference key="9">
    <citation type="journal article" date="2014" name="Front. Immunol.">
        <title>IDO2 in immunomodulation and autoimmune disease.</title>
        <authorList>
            <person name="Prendergast G.C."/>
            <person name="Metz R."/>
            <person name="Muller A.J."/>
            <person name="Merlo L.M."/>
            <person name="Mandik-Nayak L."/>
        </authorList>
    </citation>
    <scope>REVIEW</scope>
</reference>
<reference key="10">
    <citation type="journal article" date="2015" name="Front. Immunol.">
        <title>Tryptophan-degrading enzymes in tumoral immune resistance.</title>
        <authorList>
            <person name="van Baren N."/>
            <person name="Van den Eynde B.J."/>
        </authorList>
    </citation>
    <scope>REVIEW</scope>
    <scope>TISSUE SPECIFICITY</scope>
</reference>
<evidence type="ECO:0000250" key="1">
    <source>
        <dbReference type="UniProtKB" id="P14902"/>
    </source>
</evidence>
<evidence type="ECO:0000269" key="2">
    <source>
    </source>
</evidence>
<evidence type="ECO:0000269" key="3">
    <source>
    </source>
</evidence>
<evidence type="ECO:0000269" key="4">
    <source>
    </source>
</evidence>
<evidence type="ECO:0000269" key="5">
    <source>
    </source>
</evidence>
<evidence type="ECO:0000303" key="6">
    <source>
    </source>
</evidence>
<evidence type="ECO:0000303" key="7">
    <source>
    </source>
</evidence>
<evidence type="ECO:0000303" key="8">
    <source>
    </source>
</evidence>
<evidence type="ECO:0000303" key="9">
    <source>
    </source>
</evidence>
<evidence type="ECO:0000303" key="10">
    <source>
    </source>
</evidence>
<evidence type="ECO:0000303" key="11">
    <source>
    </source>
</evidence>
<evidence type="ECO:0000303" key="12">
    <source>
    </source>
</evidence>
<evidence type="ECO:0000305" key="13"/>
<evidence type="ECO:0000305" key="14">
    <source>
    </source>
</evidence>
<evidence type="ECO:0000312" key="15">
    <source>
        <dbReference type="HGNC" id="HGNC:27269"/>
    </source>
</evidence>
<keyword id="KW-0025">Alternative splicing</keyword>
<keyword id="KW-0223">Dioxygenase</keyword>
<keyword id="KW-0349">Heme</keyword>
<keyword id="KW-0391">Immunity</keyword>
<keyword id="KW-0408">Iron</keyword>
<keyword id="KW-0479">Metal-binding</keyword>
<keyword id="KW-0560">Oxidoreductase</keyword>
<keyword id="KW-1185">Reference proteome</keyword>
<keyword id="KW-0823">Tryptophan catabolism</keyword>
<comment type="function">
    <text evidence="2 12">Catalyzes the first and rate limiting step of the catabolism of the essential amino acid tryptophan along the kynurenine pathway (PubMed:17671174). Involved in immune regulation. May not play a significant role in tryptophan-related tumoral resistance (PubMed:25691885).</text>
</comment>
<comment type="catalytic activity">
    <reaction evidence="2">
        <text>L-tryptophan + O2 = N-formyl-L-kynurenine</text>
        <dbReference type="Rhea" id="RHEA:24536"/>
        <dbReference type="ChEBI" id="CHEBI:15379"/>
        <dbReference type="ChEBI" id="CHEBI:57912"/>
        <dbReference type="ChEBI" id="CHEBI:58629"/>
    </reaction>
</comment>
<comment type="cofactor">
    <cofactor evidence="1">
        <name>heme</name>
        <dbReference type="ChEBI" id="CHEBI:30413"/>
    </cofactor>
    <text evidence="1">Binds 1 heme group per subunit.</text>
</comment>
<comment type="activity regulation">
    <text evidence="2">Activity is inhibited by D-1MT (1-methyl-D-tryptophan) and MTH-trp (methylthiohydantoin-DL-tryptophan) but not L-1MT (1-methyl-L-tryptophan).</text>
</comment>
<comment type="pathway">
    <text>Amino-acid degradation; L-tryptophan degradation via kynurenine pathway; L-kynurenine from L-tryptophan: step 1/2.</text>
</comment>
<comment type="interaction">
    <interactant intactId="EBI-12233645">
        <id>Q6ZQW0-2</id>
    </interactant>
    <interactant intactId="EBI-11524452">
        <id>Q8N9N5-2</id>
        <label>BANP</label>
    </interactant>
    <organismsDiffer>false</organismsDiffer>
    <experiments>6</experiments>
</comment>
<comment type="interaction">
    <interactant intactId="EBI-12233645">
        <id>Q6ZQW0-2</id>
    </interactant>
    <interactant intactId="EBI-1216080">
        <id>Q9Y250</id>
        <label>LZTS1</label>
    </interactant>
    <organismsDiffer>false</organismsDiffer>
    <experiments>3</experiments>
</comment>
<comment type="alternative products">
    <event type="alternative splicing"/>
    <isoform>
        <id>Q6ZQW0-1</id>
        <name>1</name>
        <sequence type="displayed"/>
    </isoform>
    <isoform>
        <id>Q6ZQW0-2</id>
        <name>2</name>
        <sequence type="described" ref="VSP_024858 VSP_024859"/>
    </isoform>
    <text evidence="2 11">Additional isoforms exist at least in placenta and brain.</text>
</comment>
<comment type="tissue specificity">
    <text evidence="2 12">Detected in liver, small intestine, spleen, placenta, thymus, lung, brain, kidney, and colon (PubMed:17671174). Also expressed at low level in testis and thyroid. Not expressed in the majority of human tumor samples (&gt;99%) (PubMed:25691885).</text>
</comment>
<comment type="polymorphism">
    <text evidence="2 10">The variant Trp-248 (p.R248W) drastically reduces the enzymatic activity (PubMed:17671174, PubMed:18418598). The Del359-420 variant (p.Y359X) generates a truncated, enzymatically inactive protein (PubMed:17671174). The high prevalence of these polymorphic alleles results in a non-functional IDO2 enzyme in up to 50% of Caucasians (PubMed:18418598).</text>
</comment>
<comment type="miscellaneous">
    <text evidence="3 4 5">IDO1 and IDO2 are 2 distinct enzymes which catalyze the same reaction. IDO2 affinity for tryptophan is much lower than that of IDO1. 50 % of Caucasians harbor polymorphisms which abolish IDO2 enzymatic activity. IDO2 is expressed in human tumors in an inactive form: tryptophan degradation is entirely provided by IDO1 in these cells (PubMed:18418598). IDO2 may play a role as a negative regulator of IDO1 by competing for heme-binding with IDO1 (PubMed:25394548). Low efficiency IDO2 enzymes have been conserved throughout vertebrate evolution, whereas higher efficiency IDO1 enzymes are dispensable in many lower vertebrate lineages (PubMed:25950090). IDO1 may have arisen by gene duplication of a more ancient proto-IDO gene before the divergence of marsupial and eutherian (placental) mammals.</text>
</comment>
<comment type="similarity">
    <text evidence="13">Belongs to the indoleamine 2,3-dioxygenase family.</text>
</comment>
<comment type="sequence caution" evidence="13">
    <conflict type="erroneous initiation">
        <sequence resource="EMBL-CDS" id="AAI13497"/>
    </conflict>
    <text>Extended N-terminus.</text>
</comment>
<comment type="sequence caution" evidence="13">
    <conflict type="erroneous initiation">
        <sequence resource="EMBL-CDS" id="AAI13499"/>
    </conflict>
    <text>Extended N-terminus.</text>
</comment>
<comment type="sequence caution" evidence="13">
    <conflict type="erroneous initiation">
        <sequence resource="EMBL-CDS" id="BAC87573"/>
    </conflict>
    <text>Extended N-terminus.</text>
</comment>
<comment type="online information" name="Atlas of Genetics and Cytogenetics in Oncology and Haematology">
    <link uri="https://atlasgeneticsoncology.org/gene/44387/IDO2"/>
</comment>
<gene>
    <name evidence="15" type="primary">IDO2</name>
    <name evidence="8" type="synonym">INDOL1</name>
</gene>
<protein>
    <recommendedName>
        <fullName evidence="14">Indoleamine 2,3-dioxygenase 2</fullName>
        <shortName evidence="9">IDO-2</shortName>
        <ecNumber evidence="2">1.13.11.-</ecNumber>
    </recommendedName>
    <alternativeName>
        <fullName evidence="8">Indoleamine 2,3-dioxygenase-like protein 1</fullName>
    </alternativeName>
    <alternativeName>
        <fullName evidence="15">Indoleamine-pyrrole 2,3-dioxygenase-like protein 1</fullName>
    </alternativeName>
</protein>
<feature type="chain" id="PRO_0000285262" description="Indoleamine 2,3-dioxygenase 2">
    <location>
        <begin position="1"/>
        <end position="407"/>
    </location>
</feature>
<feature type="binding site" description="proximal binding residue" evidence="1">
    <location>
        <position position="347"/>
    </location>
    <ligand>
        <name>heme</name>
        <dbReference type="ChEBI" id="CHEBI:30413"/>
    </ligand>
    <ligandPart>
        <name>Fe</name>
        <dbReference type="ChEBI" id="CHEBI:18248"/>
    </ligandPart>
</feature>
<feature type="splice variant" id="VSP_024858" description="In isoform 2." evidence="6 7">
    <original>FLEIGNLETIISFP</original>
    <variation>DGVSLCLPGWSAVA</variation>
    <location>
        <begin position="146"/>
        <end position="159"/>
    </location>
</feature>
<feature type="splice variant" id="VSP_024859" description="In isoform 2." evidence="6 7">
    <location>
        <begin position="160"/>
        <end position="407"/>
    </location>
</feature>
<feature type="sequence variant" id="VAR_032007" description="Decreased indoleamine 2,3-dioxygenase activity; dbSNP:rs10109853." evidence="2">
    <original>R</original>
    <variation>W</variation>
    <location>
        <position position="235"/>
    </location>
</feature>
<feature type="sequence variant" id="VAR_073727" description="Loss of indoleamine 2,3-dioxygenase activity." evidence="2">
    <location>
        <begin position="346"/>
        <end position="407"/>
    </location>
</feature>
<sequence length="407" mass="45424">MEPHRPNVKTAVPLSLESYHISEEYGFLLPDSLKELPDHYRPWMEIANKLPQLIDAHQLQAHVDKMPLLSCQFLKGHREQRLAHLVLSFLTMGYVWQEGEAQPAEVLPRNLALPFVEVSRNLGLPPILVHSDLVLTNWTKKDPDGFLEIGNLETIISFPGGESLHGFILVTALVEKEAVPGIKALVQATNAILQPNQEALLQALQRLRLSIQDITKTLGQMHDYVDPDIFYAGIRIFLSGWKDNPAMPAGLMYEGVSQEPLKYSGGSAAQSTVLHAFDEFLGIRHSKESGDFLYRMRDYMPPSHKAFIEDIHSAPSLRDYILSSGQDHLLTAYNQCVQALAELRSYHITMVTKYLITAAAKAKHGKPNHLPGPPQALKDRGTGGTAVMSFLKSVRDKTLESILHPRG</sequence>
<name>I23O2_HUMAN</name>
<accession>Q6ZQW0</accession>
<accession>A4UD41</accession>
<accession>F5H5G0</accession>
<proteinExistence type="evidence at protein level"/>